<gene>
    <name type="primary">Ahi1</name>
</gene>
<proteinExistence type="evidence at protein level"/>
<accession>Q6DTM3</accession>
<protein>
    <recommendedName>
        <fullName>Jouberin</fullName>
    </recommendedName>
    <alternativeName>
        <fullName>Abelson helper integration site 1 protein homolog</fullName>
        <shortName>AHI-1</shortName>
    </alternativeName>
</protein>
<comment type="function">
    <text evidence="2">Involved in vesicle trafficking and required for ciliogenesis, formation of primary non-motile cilium, and recruitment of RAB8A to the basal body of primary cilium. Component of the tectonic-like complex, a complex localized at the transition zone of primary cilia and acting as a barrier that prevents diffusion of transmembrane proteins between the cilia and plasma membranes. Involved in neuronal differentiation. As a positive modulator of classical Wnt signaling, may play a crucial role in ciliary signaling during cerebellum embryonic development.</text>
</comment>
<comment type="subunit">
    <text evidence="2 3">Self-associates. Part of the tectonic-like complex (also named B9 complex). Interacts with MKS1. Interacts with NPHP1; probably as heterodimers and/or AHI1(2):NPHP1(2) heterotetramers. Interacts (via SH3 domain) with the dynamin GTPase DNM2. Interacts with HAP1; probably as AHI1(2):HAP1(2) heterotetramers. Interacts with RAB8A. Interacts with CEND1 (By similarity). Interacts with SPATA7 (By similarity).</text>
</comment>
<comment type="subcellular location">
    <subcellularLocation>
        <location evidence="2">Cytoplasm</location>
        <location evidence="2">Cytoskeleton</location>
        <location evidence="2">Cilium basal body</location>
    </subcellularLocation>
    <subcellularLocation>
        <location evidence="2">Cytoplasm</location>
        <location evidence="2">Cytoskeleton</location>
        <location evidence="2">Microtubule organizing center</location>
        <location evidence="2">Centrosome</location>
        <location evidence="2">Centriole</location>
    </subcellularLocation>
    <subcellularLocation>
        <location evidence="3">Cell junction</location>
        <location evidence="3">Adherens junction</location>
    </subcellularLocation>
    <text evidence="2">In the retinal photoreceptor cell layer, localizes at the connecting cilium.</text>
</comment>
<feature type="chain" id="PRO_0000050840" description="Jouberin">
    <location>
        <begin position="1"/>
        <end position="1047"/>
    </location>
</feature>
<feature type="repeat" description="WD 1">
    <location>
        <begin position="458"/>
        <end position="500"/>
    </location>
</feature>
<feature type="repeat" description="WD 2">
    <location>
        <begin position="503"/>
        <end position="542"/>
    </location>
</feature>
<feature type="repeat" description="WD 3">
    <location>
        <begin position="546"/>
        <end position="586"/>
    </location>
</feature>
<feature type="repeat" description="WD 4">
    <location>
        <begin position="593"/>
        <end position="632"/>
    </location>
</feature>
<feature type="repeat" description="WD 5">
    <location>
        <begin position="649"/>
        <end position="688"/>
    </location>
</feature>
<feature type="repeat" description="WD 6">
    <location>
        <begin position="692"/>
        <end position="731"/>
    </location>
</feature>
<feature type="repeat" description="WD 7">
    <location>
        <begin position="736"/>
        <end position="777"/>
    </location>
</feature>
<feature type="domain" description="SH3" evidence="4">
    <location>
        <begin position="903"/>
        <end position="963"/>
    </location>
</feature>
<feature type="region of interest" description="Interaction with HAP1" evidence="1">
    <location>
        <begin position="1"/>
        <end position="285"/>
    </location>
</feature>
<feature type="region of interest" description="Disordered" evidence="5">
    <location>
        <begin position="1"/>
        <end position="44"/>
    </location>
</feature>
<feature type="region of interest" description="Disordered" evidence="5">
    <location>
        <begin position="67"/>
        <end position="185"/>
    </location>
</feature>
<feature type="region of interest" description="Disordered" evidence="5">
    <location>
        <begin position="964"/>
        <end position="1047"/>
    </location>
</feature>
<feature type="compositionally biased region" description="Basic and acidic residues" evidence="5">
    <location>
        <begin position="1"/>
        <end position="17"/>
    </location>
</feature>
<feature type="compositionally biased region" description="Basic and acidic residues" evidence="5">
    <location>
        <begin position="77"/>
        <end position="86"/>
    </location>
</feature>
<feature type="compositionally biased region" description="Basic residues" evidence="5">
    <location>
        <begin position="87"/>
        <end position="96"/>
    </location>
</feature>
<feature type="compositionally biased region" description="Basic and acidic residues" evidence="5">
    <location>
        <begin position="116"/>
        <end position="132"/>
    </location>
</feature>
<feature type="compositionally biased region" description="Basic residues" evidence="5">
    <location>
        <begin position="150"/>
        <end position="160"/>
    </location>
</feature>
<feature type="compositionally biased region" description="Basic and acidic residues" evidence="5">
    <location>
        <begin position="173"/>
        <end position="185"/>
    </location>
</feature>
<feature type="compositionally biased region" description="Basic and acidic residues" evidence="5">
    <location>
        <begin position="964"/>
        <end position="1003"/>
    </location>
</feature>
<feature type="compositionally biased region" description="Basic and acidic residues" evidence="5">
    <location>
        <begin position="1012"/>
        <end position="1040"/>
    </location>
</feature>
<feature type="modified residue" description="Phosphoserine" evidence="3">
    <location>
        <position position="854"/>
    </location>
</feature>
<feature type="modified residue" description="Phosphoserine" evidence="3">
    <location>
        <position position="975"/>
    </location>
</feature>
<reference key="1">
    <citation type="journal article" date="2002" name="J. Virol.">
        <title>Ahi-1, a novel gene encoding a modular protein with WD40-repeat and SH3 domains, is targeted by the Ahi-1 and Mis-2 provirus integrations.</title>
        <authorList>
            <person name="Jiang X."/>
            <person name="Hanna Z."/>
            <person name="Kaouass M."/>
            <person name="Girard L."/>
            <person name="Jolicoeur P."/>
        </authorList>
    </citation>
    <scope>NUCLEOTIDE SEQUENCE [MRNA]</scope>
    <source>
        <tissue>Brain</tissue>
    </source>
</reference>
<reference key="2">
    <citation type="submission" date="2004-06" db="EMBL/GenBank/DDBJ databases">
        <authorList>
            <person name="Kim H."/>
            <person name="Park S.-H."/>
            <person name="Sun W."/>
            <person name="Choi B.-I."/>
            <person name="Han S.-B."/>
        </authorList>
    </citation>
    <scope>NUCLEOTIDE SEQUENCE [MRNA]</scope>
    <source>
        <strain>Sprague-Dawley</strain>
        <tissue>Brain</tissue>
    </source>
</reference>
<reference key="3">
    <citation type="journal article" date="2012" name="Nat. Commun.">
        <title>Quantitative maps of protein phosphorylation sites across 14 different rat organs and tissues.</title>
        <authorList>
            <person name="Lundby A."/>
            <person name="Secher A."/>
            <person name="Lage K."/>
            <person name="Nordsborg N.B."/>
            <person name="Dmytriyev A."/>
            <person name="Lundby C."/>
            <person name="Olsen J.V."/>
        </authorList>
    </citation>
    <scope>IDENTIFICATION BY MASS SPECTROMETRY [LARGE SCALE ANALYSIS]</scope>
</reference>
<organism>
    <name type="scientific">Rattus norvegicus</name>
    <name type="common">Rat</name>
    <dbReference type="NCBI Taxonomy" id="10116"/>
    <lineage>
        <taxon>Eukaryota</taxon>
        <taxon>Metazoa</taxon>
        <taxon>Chordata</taxon>
        <taxon>Craniata</taxon>
        <taxon>Vertebrata</taxon>
        <taxon>Euteleostomi</taxon>
        <taxon>Mammalia</taxon>
        <taxon>Eutheria</taxon>
        <taxon>Euarchontoglires</taxon>
        <taxon>Glires</taxon>
        <taxon>Rodentia</taxon>
        <taxon>Myomorpha</taxon>
        <taxon>Muroidea</taxon>
        <taxon>Muridae</taxon>
        <taxon>Murinae</taxon>
        <taxon>Rattus</taxon>
    </lineage>
</organism>
<dbReference type="EMBL" id="AY647140">
    <property type="protein sequence ID" value="AAT66919.1"/>
    <property type="molecule type" value="mRNA"/>
</dbReference>
<dbReference type="RefSeq" id="NP_001002277.1">
    <property type="nucleotide sequence ID" value="NM_001002277.1"/>
</dbReference>
<dbReference type="SMR" id="Q6DTM3"/>
<dbReference type="FunCoup" id="Q6DTM3">
    <property type="interactions" value="646"/>
</dbReference>
<dbReference type="STRING" id="10116.ENSRNOP00000019077"/>
<dbReference type="iPTMnet" id="Q6DTM3"/>
<dbReference type="PhosphoSitePlus" id="Q6DTM3"/>
<dbReference type="PaxDb" id="10116-ENSRNOP00000019077"/>
<dbReference type="GeneID" id="308923"/>
<dbReference type="KEGG" id="rno:308923"/>
<dbReference type="AGR" id="RGD:1303040"/>
<dbReference type="CTD" id="54806"/>
<dbReference type="RGD" id="1303040">
    <property type="gene designation" value="Ahi1"/>
</dbReference>
<dbReference type="eggNOG" id="KOG0266">
    <property type="taxonomic scope" value="Eukaryota"/>
</dbReference>
<dbReference type="InParanoid" id="Q6DTM3"/>
<dbReference type="PhylomeDB" id="Q6DTM3"/>
<dbReference type="Reactome" id="R-RNO-5620912">
    <property type="pathway name" value="Anchoring of the basal body to the plasma membrane"/>
</dbReference>
<dbReference type="PRO" id="PR:Q6DTM3"/>
<dbReference type="Proteomes" id="UP000002494">
    <property type="component" value="Unplaced"/>
</dbReference>
<dbReference type="GO" id="GO:0005912">
    <property type="term" value="C:adherens junction"/>
    <property type="evidence" value="ECO:0000250"/>
    <property type="project" value="UniProtKB"/>
</dbReference>
<dbReference type="GO" id="GO:0005911">
    <property type="term" value="C:cell-cell junction"/>
    <property type="evidence" value="ECO:0000250"/>
    <property type="project" value="UniProtKB"/>
</dbReference>
<dbReference type="GO" id="GO:0005814">
    <property type="term" value="C:centriole"/>
    <property type="evidence" value="ECO:0000250"/>
    <property type="project" value="UniProtKB"/>
</dbReference>
<dbReference type="GO" id="GO:0005813">
    <property type="term" value="C:centrosome"/>
    <property type="evidence" value="ECO:0000250"/>
    <property type="project" value="UniProtKB"/>
</dbReference>
<dbReference type="GO" id="GO:0036064">
    <property type="term" value="C:ciliary basal body"/>
    <property type="evidence" value="ECO:0000250"/>
    <property type="project" value="UniProtKB"/>
</dbReference>
<dbReference type="GO" id="GO:0005929">
    <property type="term" value="C:cilium"/>
    <property type="evidence" value="ECO:0000250"/>
    <property type="project" value="UniProtKB"/>
</dbReference>
<dbReference type="GO" id="GO:0005737">
    <property type="term" value="C:cytoplasm"/>
    <property type="evidence" value="ECO:0007669"/>
    <property type="project" value="UniProtKB-KW"/>
</dbReference>
<dbReference type="GO" id="GO:0036038">
    <property type="term" value="C:MKS complex"/>
    <property type="evidence" value="ECO:0000250"/>
    <property type="project" value="UniProtKB"/>
</dbReference>
<dbReference type="GO" id="GO:0097730">
    <property type="term" value="C:non-motile cilium"/>
    <property type="evidence" value="ECO:0000250"/>
    <property type="project" value="UniProtKB"/>
</dbReference>
<dbReference type="GO" id="GO:0120206">
    <property type="term" value="C:photoreceptor distal connecting cilium"/>
    <property type="evidence" value="ECO:0000266"/>
    <property type="project" value="RGD"/>
</dbReference>
<dbReference type="GO" id="GO:0001750">
    <property type="term" value="C:photoreceptor outer segment"/>
    <property type="evidence" value="ECO:0000266"/>
    <property type="project" value="RGD"/>
</dbReference>
<dbReference type="GO" id="GO:0042802">
    <property type="term" value="F:identical protein binding"/>
    <property type="evidence" value="ECO:0000266"/>
    <property type="project" value="RGD"/>
</dbReference>
<dbReference type="GO" id="GO:0007169">
    <property type="term" value="P:cell surface receptor protein tyrosine kinase signaling pathway"/>
    <property type="evidence" value="ECO:0000250"/>
    <property type="project" value="UniProtKB"/>
</dbReference>
<dbReference type="GO" id="GO:0007417">
    <property type="term" value="P:central nervous system development"/>
    <property type="evidence" value="ECO:0000250"/>
    <property type="project" value="UniProtKB"/>
</dbReference>
<dbReference type="GO" id="GO:0060271">
    <property type="term" value="P:cilium assembly"/>
    <property type="evidence" value="ECO:0000250"/>
    <property type="project" value="UniProtKB"/>
</dbReference>
<dbReference type="GO" id="GO:0035844">
    <property type="term" value="P:cloaca development"/>
    <property type="evidence" value="ECO:0000250"/>
    <property type="project" value="UniProtKB"/>
</dbReference>
<dbReference type="GO" id="GO:1990403">
    <property type="term" value="P:embryonic brain development"/>
    <property type="evidence" value="ECO:0000270"/>
    <property type="project" value="RGD"/>
</dbReference>
<dbReference type="GO" id="GO:0042462">
    <property type="term" value="P:eye photoreceptor cell development"/>
    <property type="evidence" value="ECO:0000266"/>
    <property type="project" value="RGD"/>
</dbReference>
<dbReference type="GO" id="GO:0001947">
    <property type="term" value="P:heart looping"/>
    <property type="evidence" value="ECO:0000250"/>
    <property type="project" value="UniProtKB"/>
</dbReference>
<dbReference type="GO" id="GO:0030902">
    <property type="term" value="P:hindbrain development"/>
    <property type="evidence" value="ECO:0000250"/>
    <property type="project" value="UniProtKB"/>
</dbReference>
<dbReference type="GO" id="GO:0001738">
    <property type="term" value="P:morphogenesis of a polarized epithelium"/>
    <property type="evidence" value="ECO:0000250"/>
    <property type="project" value="UniProtKB"/>
</dbReference>
<dbReference type="GO" id="GO:0044458">
    <property type="term" value="P:motile cilium assembly"/>
    <property type="evidence" value="ECO:0000318"/>
    <property type="project" value="GO_Central"/>
</dbReference>
<dbReference type="GO" id="GO:0043066">
    <property type="term" value="P:negative regulation of apoptotic process"/>
    <property type="evidence" value="ECO:0000250"/>
    <property type="project" value="UniProtKB"/>
</dbReference>
<dbReference type="GO" id="GO:0046325">
    <property type="term" value="P:negative regulation of D-glucose import"/>
    <property type="evidence" value="ECO:0000315"/>
    <property type="project" value="RGD"/>
</dbReference>
<dbReference type="GO" id="GO:1905515">
    <property type="term" value="P:non-motile cilium assembly"/>
    <property type="evidence" value="ECO:0000266"/>
    <property type="project" value="RGD"/>
</dbReference>
<dbReference type="GO" id="GO:0071599">
    <property type="term" value="P:otic vesicle development"/>
    <property type="evidence" value="ECO:0000250"/>
    <property type="project" value="UniProtKB"/>
</dbReference>
<dbReference type="GO" id="GO:0035845">
    <property type="term" value="P:photoreceptor cell outer segment organization"/>
    <property type="evidence" value="ECO:0000250"/>
    <property type="project" value="UniProtKB"/>
</dbReference>
<dbReference type="GO" id="GO:0010628">
    <property type="term" value="P:positive regulation of gene expression"/>
    <property type="evidence" value="ECO:0000266"/>
    <property type="project" value="RGD"/>
</dbReference>
<dbReference type="GO" id="GO:0045927">
    <property type="term" value="P:positive regulation of growth"/>
    <property type="evidence" value="ECO:0000266"/>
    <property type="project" value="RGD"/>
</dbReference>
<dbReference type="GO" id="GO:0010976">
    <property type="term" value="P:positive regulation of neuron projection development"/>
    <property type="evidence" value="ECO:0000266"/>
    <property type="project" value="RGD"/>
</dbReference>
<dbReference type="GO" id="GO:0030862">
    <property type="term" value="P:positive regulation of polarized epithelial cell differentiation"/>
    <property type="evidence" value="ECO:0000250"/>
    <property type="project" value="UniProtKB"/>
</dbReference>
<dbReference type="GO" id="GO:0002092">
    <property type="term" value="P:positive regulation of receptor internalization"/>
    <property type="evidence" value="ECO:0000250"/>
    <property type="project" value="UniProtKB"/>
</dbReference>
<dbReference type="GO" id="GO:0045944">
    <property type="term" value="P:positive regulation of transcription by RNA polymerase II"/>
    <property type="evidence" value="ECO:0000250"/>
    <property type="project" value="UniProtKB"/>
</dbReference>
<dbReference type="GO" id="GO:0039008">
    <property type="term" value="P:pronephric nephron tubule morphogenesis"/>
    <property type="evidence" value="ECO:0000250"/>
    <property type="project" value="UniProtKB"/>
</dbReference>
<dbReference type="GO" id="GO:0008104">
    <property type="term" value="P:protein localization"/>
    <property type="evidence" value="ECO:0000250"/>
    <property type="project" value="UniProtKB"/>
</dbReference>
<dbReference type="GO" id="GO:0033365">
    <property type="term" value="P:protein localization to organelle"/>
    <property type="evidence" value="ECO:0000266"/>
    <property type="project" value="RGD"/>
</dbReference>
<dbReference type="GO" id="GO:0050795">
    <property type="term" value="P:regulation of behavior"/>
    <property type="evidence" value="ECO:0000250"/>
    <property type="project" value="UniProtKB"/>
</dbReference>
<dbReference type="GO" id="GO:0050708">
    <property type="term" value="P:regulation of protein secretion"/>
    <property type="evidence" value="ECO:0000266"/>
    <property type="project" value="RGD"/>
</dbReference>
<dbReference type="GO" id="GO:0032094">
    <property type="term" value="P:response to food"/>
    <property type="evidence" value="ECO:0000270"/>
    <property type="project" value="RGD"/>
</dbReference>
<dbReference type="GO" id="GO:0060041">
    <property type="term" value="P:retina development in camera-type eye"/>
    <property type="evidence" value="ECO:0000266"/>
    <property type="project" value="RGD"/>
</dbReference>
<dbReference type="GO" id="GO:0010842">
    <property type="term" value="P:retina layer formation"/>
    <property type="evidence" value="ECO:0000250"/>
    <property type="project" value="UniProtKB"/>
</dbReference>
<dbReference type="GO" id="GO:0046549">
    <property type="term" value="P:retinal cone cell development"/>
    <property type="evidence" value="ECO:0000266"/>
    <property type="project" value="RGD"/>
</dbReference>
<dbReference type="GO" id="GO:0046548">
    <property type="term" value="P:retinal rod cell development"/>
    <property type="evidence" value="ECO:0000266"/>
    <property type="project" value="RGD"/>
</dbReference>
<dbReference type="GO" id="GO:0065001">
    <property type="term" value="P:specification of axis polarity"/>
    <property type="evidence" value="ECO:0000250"/>
    <property type="project" value="UniProtKB"/>
</dbReference>
<dbReference type="GO" id="GO:0021510">
    <property type="term" value="P:spinal cord development"/>
    <property type="evidence" value="ECO:0000270"/>
    <property type="project" value="RGD"/>
</dbReference>
<dbReference type="GO" id="GO:0006903">
    <property type="term" value="P:vesicle targeting"/>
    <property type="evidence" value="ECO:0000266"/>
    <property type="project" value="RGD"/>
</dbReference>
<dbReference type="GO" id="GO:0016192">
    <property type="term" value="P:vesicle-mediated transport"/>
    <property type="evidence" value="ECO:0000250"/>
    <property type="project" value="UniProtKB"/>
</dbReference>
<dbReference type="CDD" id="cd11812">
    <property type="entry name" value="SH3_AHI-1"/>
    <property type="match status" value="1"/>
</dbReference>
<dbReference type="FunFam" id="2.130.10.10:FF:000112">
    <property type="entry name" value="jouberin isoform X2"/>
    <property type="match status" value="1"/>
</dbReference>
<dbReference type="FunFam" id="2.30.30.40:FF:000132">
    <property type="entry name" value="jouberin isoform X2"/>
    <property type="match status" value="1"/>
</dbReference>
<dbReference type="Gene3D" id="2.30.30.40">
    <property type="entry name" value="SH3 Domains"/>
    <property type="match status" value="1"/>
</dbReference>
<dbReference type="Gene3D" id="2.130.10.10">
    <property type="entry name" value="YVTN repeat-like/Quinoprotein amine dehydrogenase"/>
    <property type="match status" value="1"/>
</dbReference>
<dbReference type="InterPro" id="IPR035832">
    <property type="entry name" value="AHI1_SH3"/>
</dbReference>
<dbReference type="InterPro" id="IPR052803">
    <property type="entry name" value="Cilium-Associated_Jouberin"/>
</dbReference>
<dbReference type="InterPro" id="IPR036028">
    <property type="entry name" value="SH3-like_dom_sf"/>
</dbReference>
<dbReference type="InterPro" id="IPR001452">
    <property type="entry name" value="SH3_domain"/>
</dbReference>
<dbReference type="InterPro" id="IPR015943">
    <property type="entry name" value="WD40/YVTN_repeat-like_dom_sf"/>
</dbReference>
<dbReference type="InterPro" id="IPR036322">
    <property type="entry name" value="WD40_repeat_dom_sf"/>
</dbReference>
<dbReference type="InterPro" id="IPR001680">
    <property type="entry name" value="WD40_rpt"/>
</dbReference>
<dbReference type="PANTHER" id="PTHR44499">
    <property type="entry name" value="JOUBERIN"/>
    <property type="match status" value="1"/>
</dbReference>
<dbReference type="PANTHER" id="PTHR44499:SF1">
    <property type="entry name" value="JOUBERIN"/>
    <property type="match status" value="1"/>
</dbReference>
<dbReference type="Pfam" id="PF00018">
    <property type="entry name" value="SH3_1"/>
    <property type="match status" value="1"/>
</dbReference>
<dbReference type="Pfam" id="PF00400">
    <property type="entry name" value="WD40"/>
    <property type="match status" value="4"/>
</dbReference>
<dbReference type="PRINTS" id="PR00452">
    <property type="entry name" value="SH3DOMAIN"/>
</dbReference>
<dbReference type="SMART" id="SM00326">
    <property type="entry name" value="SH3"/>
    <property type="match status" value="1"/>
</dbReference>
<dbReference type="SMART" id="SM00320">
    <property type="entry name" value="WD40"/>
    <property type="match status" value="7"/>
</dbReference>
<dbReference type="SUPFAM" id="SSF50044">
    <property type="entry name" value="SH3-domain"/>
    <property type="match status" value="1"/>
</dbReference>
<dbReference type="SUPFAM" id="SSF50978">
    <property type="entry name" value="WD40 repeat-like"/>
    <property type="match status" value="1"/>
</dbReference>
<dbReference type="PROSITE" id="PS50002">
    <property type="entry name" value="SH3"/>
    <property type="match status" value="1"/>
</dbReference>
<dbReference type="PROSITE" id="PS50082">
    <property type="entry name" value="WD_REPEATS_2"/>
    <property type="match status" value="4"/>
</dbReference>
<dbReference type="PROSITE" id="PS50294">
    <property type="entry name" value="WD_REPEATS_REGION"/>
    <property type="match status" value="1"/>
</dbReference>
<sequence>MEQETPEKVDSAQEKVRGKSQPADDSEDSREKAGTEGTGELTEAYELQVAEEMAKEIKKKIRRKLKEQLTYFPPDTLLHDDKLGSEKRKKKKKKKVPVPAKPETSPSDVCDSAAEGEQKKEGAPEGSHHREGGCSTEQNADASVPENTKPKPKKMKKKPKAVSEDNEETNGDGVHEITGRDSPVHPKCLLDDDLVMGVYIHRTDRLKSDFMISHPMVKIHVVDEHTGQYVKKDDSERPVSSYYEKDNVDYILPIMTQPYDFKKLKSRLPEWEEQVIFNENFPYLLREFDECPKVILFFEILDFLSMDEIKNNSEFQNQECGFRKIAWAFLKLLGANGNANINSKLRLQLYYPPTKPRSQPNVVEVFEWWSKCPRNRYPSTLYVTVRGLKVPDCIKPSYRSMMALQEERGTPVYCERHRETSSVDTEPGLEDSKEEVKWKRLPGQACRIPNKHLFSLNAGERGCFCLDFSHNGRILAAACASRDGYPIILYEIPSGRFMRELCGHLNIIYDLDWSKDDRYLVTSSSDGTARVWKNEINSTSTFRVLPHPSFVYTARFHPATRELVVTGCYDSMIRIWKVDAREDAAILVRQLDVHKSFVNSICFDDEGHHMYSGDCIGVIAVWDTYVKVTDVQHSVRHWTINKEIKETEFRGVPVSYLEVHPNGKRLLIHTKDSTLRIMDLRILAARKFVGAANYREKIHSTLTPCGTLLFSGSEDGIVYVWNPETGEQVAMYSELPFKSTIRDISYHPFENMVAFCAFGQSEPILLYIYDFQVAQQEAEMLKRYSGTVPLPGIHLSEDALCTCPKLPQQGSFQIDEFVNTENNSSRKIQLVKQRLETVTEVIRSCAAKVNKNLSITSPPPGPAKKPRVKQSFVLTTDQIIHQFGVPQTAFISIERRPFMRPVDPPPMVVALYDYTASRSDELTIHRGDIIRVFFKDNEDWWYGSLGKGQEGFFPANHVASETLYRDSPPKVKERSPPLTPKEKAKMEKPPASRKSLIKDRFLDSRLGSKPMGHSEKGRDQNFEERGHKSDMEMKKSEPTVRKVTLIE</sequence>
<name>AHI1_RAT</name>
<keyword id="KW-0965">Cell junction</keyword>
<keyword id="KW-0966">Cell projection</keyword>
<keyword id="KW-0969">Cilium</keyword>
<keyword id="KW-0970">Cilium biogenesis/degradation</keyword>
<keyword id="KW-0963">Cytoplasm</keyword>
<keyword id="KW-0206">Cytoskeleton</keyword>
<keyword id="KW-0217">Developmental protein</keyword>
<keyword id="KW-0221">Differentiation</keyword>
<keyword id="KW-0597">Phosphoprotein</keyword>
<keyword id="KW-1185">Reference proteome</keyword>
<keyword id="KW-0677">Repeat</keyword>
<keyword id="KW-0728">SH3 domain</keyword>
<keyword id="KW-0853">WD repeat</keyword>
<evidence type="ECO:0000250" key="1"/>
<evidence type="ECO:0000250" key="2">
    <source>
        <dbReference type="UniProtKB" id="Q8K3E5"/>
    </source>
</evidence>
<evidence type="ECO:0000250" key="3">
    <source>
        <dbReference type="UniProtKB" id="Q8N157"/>
    </source>
</evidence>
<evidence type="ECO:0000255" key="4">
    <source>
        <dbReference type="PROSITE-ProRule" id="PRU00192"/>
    </source>
</evidence>
<evidence type="ECO:0000256" key="5">
    <source>
        <dbReference type="SAM" id="MobiDB-lite"/>
    </source>
</evidence>